<sequence>MPQAVAGPEIERLIQLLARMPGLGPRSARRAALQLIKKREALLAPLAEAMRVACERIVVCHECGNVDTSDPCTICRDHSRDPSILVVVEDVSDLWALERSGAVTARYHVLGGVLSALDGIRPENLNLSRLVERASVPEMREVILALNATVDGQTTAHYITELLAHLPVKVTKLAHGVPVGGELDYLDEGTLSAAIRQRTAF</sequence>
<comment type="function">
    <text evidence="1">May play a role in DNA repair. It seems to be involved in an RecBC-independent recombinational process of DNA repair. It may act with RecF and RecO.</text>
</comment>
<comment type="similarity">
    <text evidence="1">Belongs to the RecR family.</text>
</comment>
<proteinExistence type="inferred from homology"/>
<feature type="chain" id="PRO_1000195399" description="Recombination protein RecR">
    <location>
        <begin position="1"/>
        <end position="201"/>
    </location>
</feature>
<feature type="domain" description="Toprim" evidence="1">
    <location>
        <begin position="83"/>
        <end position="178"/>
    </location>
</feature>
<feature type="zinc finger region" description="C4-type" evidence="1">
    <location>
        <begin position="60"/>
        <end position="75"/>
    </location>
</feature>
<accession>B8IFQ5</accession>
<dbReference type="EMBL" id="CP001349">
    <property type="protein sequence ID" value="ACL59615.1"/>
    <property type="molecule type" value="Genomic_DNA"/>
</dbReference>
<dbReference type="RefSeq" id="WP_015931249.1">
    <property type="nucleotide sequence ID" value="NC_011894.1"/>
</dbReference>
<dbReference type="SMR" id="B8IFQ5"/>
<dbReference type="STRING" id="460265.Mnod_4750"/>
<dbReference type="KEGG" id="mno:Mnod_4750"/>
<dbReference type="eggNOG" id="COG0353">
    <property type="taxonomic scope" value="Bacteria"/>
</dbReference>
<dbReference type="HOGENOM" id="CLU_060739_1_1_5"/>
<dbReference type="OrthoDB" id="9802672at2"/>
<dbReference type="Proteomes" id="UP000008207">
    <property type="component" value="Chromosome"/>
</dbReference>
<dbReference type="GO" id="GO:0003677">
    <property type="term" value="F:DNA binding"/>
    <property type="evidence" value="ECO:0007669"/>
    <property type="project" value="UniProtKB-UniRule"/>
</dbReference>
<dbReference type="GO" id="GO:0008270">
    <property type="term" value="F:zinc ion binding"/>
    <property type="evidence" value="ECO:0007669"/>
    <property type="project" value="UniProtKB-KW"/>
</dbReference>
<dbReference type="GO" id="GO:0006310">
    <property type="term" value="P:DNA recombination"/>
    <property type="evidence" value="ECO:0007669"/>
    <property type="project" value="UniProtKB-UniRule"/>
</dbReference>
<dbReference type="GO" id="GO:0006281">
    <property type="term" value="P:DNA repair"/>
    <property type="evidence" value="ECO:0007669"/>
    <property type="project" value="UniProtKB-UniRule"/>
</dbReference>
<dbReference type="CDD" id="cd01025">
    <property type="entry name" value="TOPRIM_recR"/>
    <property type="match status" value="1"/>
</dbReference>
<dbReference type="Gene3D" id="3.40.1360.10">
    <property type="match status" value="1"/>
</dbReference>
<dbReference type="Gene3D" id="6.10.250.240">
    <property type="match status" value="1"/>
</dbReference>
<dbReference type="Gene3D" id="1.10.8.420">
    <property type="entry name" value="RecR Domain 1"/>
    <property type="match status" value="1"/>
</dbReference>
<dbReference type="HAMAP" id="MF_00017">
    <property type="entry name" value="RecR"/>
    <property type="match status" value="1"/>
</dbReference>
<dbReference type="InterPro" id="IPR000093">
    <property type="entry name" value="DNA_Rcmb_RecR"/>
</dbReference>
<dbReference type="InterPro" id="IPR023627">
    <property type="entry name" value="Rcmb_RecR"/>
</dbReference>
<dbReference type="InterPro" id="IPR015967">
    <property type="entry name" value="Rcmb_RecR_Znf"/>
</dbReference>
<dbReference type="InterPro" id="IPR006171">
    <property type="entry name" value="TOPRIM_dom"/>
</dbReference>
<dbReference type="InterPro" id="IPR034137">
    <property type="entry name" value="TOPRIM_RecR"/>
</dbReference>
<dbReference type="NCBIfam" id="TIGR00615">
    <property type="entry name" value="recR"/>
    <property type="match status" value="1"/>
</dbReference>
<dbReference type="PANTHER" id="PTHR30446">
    <property type="entry name" value="RECOMBINATION PROTEIN RECR"/>
    <property type="match status" value="1"/>
</dbReference>
<dbReference type="PANTHER" id="PTHR30446:SF0">
    <property type="entry name" value="RECOMBINATION PROTEIN RECR"/>
    <property type="match status" value="1"/>
</dbReference>
<dbReference type="Pfam" id="PF21175">
    <property type="entry name" value="RecR_C"/>
    <property type="match status" value="1"/>
</dbReference>
<dbReference type="Pfam" id="PF21176">
    <property type="entry name" value="RecR_HhH"/>
    <property type="match status" value="1"/>
</dbReference>
<dbReference type="Pfam" id="PF02132">
    <property type="entry name" value="RecR_ZnF"/>
    <property type="match status" value="1"/>
</dbReference>
<dbReference type="Pfam" id="PF13662">
    <property type="entry name" value="Toprim_4"/>
    <property type="match status" value="1"/>
</dbReference>
<dbReference type="SUPFAM" id="SSF111304">
    <property type="entry name" value="Recombination protein RecR"/>
    <property type="match status" value="1"/>
</dbReference>
<dbReference type="PROSITE" id="PS01300">
    <property type="entry name" value="RECR"/>
    <property type="match status" value="1"/>
</dbReference>
<dbReference type="PROSITE" id="PS50880">
    <property type="entry name" value="TOPRIM"/>
    <property type="match status" value="1"/>
</dbReference>
<reference key="1">
    <citation type="submission" date="2009-01" db="EMBL/GenBank/DDBJ databases">
        <title>Complete sequence of chromosome of Methylobacterium nodulans ORS 2060.</title>
        <authorList>
            <consortium name="US DOE Joint Genome Institute"/>
            <person name="Lucas S."/>
            <person name="Copeland A."/>
            <person name="Lapidus A."/>
            <person name="Glavina del Rio T."/>
            <person name="Dalin E."/>
            <person name="Tice H."/>
            <person name="Bruce D."/>
            <person name="Goodwin L."/>
            <person name="Pitluck S."/>
            <person name="Sims D."/>
            <person name="Brettin T."/>
            <person name="Detter J.C."/>
            <person name="Han C."/>
            <person name="Larimer F."/>
            <person name="Land M."/>
            <person name="Hauser L."/>
            <person name="Kyrpides N."/>
            <person name="Ivanova N."/>
            <person name="Marx C.J."/>
            <person name="Richardson P."/>
        </authorList>
    </citation>
    <scope>NUCLEOTIDE SEQUENCE [LARGE SCALE GENOMIC DNA]</scope>
    <source>
        <strain>LMG 21967 / CNCM I-2342 / ORS 2060</strain>
    </source>
</reference>
<organism>
    <name type="scientific">Methylobacterium nodulans (strain LMG 21967 / CNCM I-2342 / ORS 2060)</name>
    <dbReference type="NCBI Taxonomy" id="460265"/>
    <lineage>
        <taxon>Bacteria</taxon>
        <taxon>Pseudomonadati</taxon>
        <taxon>Pseudomonadota</taxon>
        <taxon>Alphaproteobacteria</taxon>
        <taxon>Hyphomicrobiales</taxon>
        <taxon>Methylobacteriaceae</taxon>
        <taxon>Methylobacterium</taxon>
    </lineage>
</organism>
<evidence type="ECO:0000255" key="1">
    <source>
        <dbReference type="HAMAP-Rule" id="MF_00017"/>
    </source>
</evidence>
<gene>
    <name evidence="1" type="primary">recR</name>
    <name type="ordered locus">Mnod_4750</name>
</gene>
<keyword id="KW-0227">DNA damage</keyword>
<keyword id="KW-0233">DNA recombination</keyword>
<keyword id="KW-0234">DNA repair</keyword>
<keyword id="KW-0479">Metal-binding</keyword>
<keyword id="KW-1185">Reference proteome</keyword>
<keyword id="KW-0862">Zinc</keyword>
<keyword id="KW-0863">Zinc-finger</keyword>
<protein>
    <recommendedName>
        <fullName evidence="1">Recombination protein RecR</fullName>
    </recommendedName>
</protein>
<name>RECR_METNO</name>